<organism>
    <name type="scientific">Homo sapiens</name>
    <name type="common">Human</name>
    <dbReference type="NCBI Taxonomy" id="9606"/>
    <lineage>
        <taxon>Eukaryota</taxon>
        <taxon>Metazoa</taxon>
        <taxon>Chordata</taxon>
        <taxon>Craniata</taxon>
        <taxon>Vertebrata</taxon>
        <taxon>Euteleostomi</taxon>
        <taxon>Mammalia</taxon>
        <taxon>Eutheria</taxon>
        <taxon>Euarchontoglires</taxon>
        <taxon>Primates</taxon>
        <taxon>Haplorrhini</taxon>
        <taxon>Catarrhini</taxon>
        <taxon>Hominidae</taxon>
        <taxon>Homo</taxon>
    </lineage>
</organism>
<sequence>MSGRGKQGGKARAKSKSRSSRAGLQFPVGRIHRLLRKGNYAERIGAGAPVYLAAVLEYLTAEILELAGNASRDNKKTRIIPRHLQLAIRNDEELNKLLGGVTIAQGGVLPNIQAVLLPKKTESHHHKAQSK</sequence>
<gene>
    <name evidence="26" type="primary">H2AC1</name>
    <name type="synonym">H2AFR</name>
    <name evidence="26" type="synonym">HIST1H2AA</name>
</gene>
<protein>
    <recommendedName>
        <fullName>Histone H2A type 1-A</fullName>
    </recommendedName>
    <alternativeName>
        <fullName evidence="26">H2A-clustered histone 1</fullName>
    </alternativeName>
    <alternativeName>
        <fullName>Histone H2A/r</fullName>
    </alternativeName>
</protein>
<feature type="initiator methionine" description="Removed" evidence="7">
    <location>
        <position position="1"/>
    </location>
</feature>
<feature type="chain" id="PRO_0000230199" description="Histone H2A type 1-A">
    <location>
        <begin position="2"/>
        <end position="131"/>
    </location>
</feature>
<feature type="region of interest" description="Disordered" evidence="3">
    <location>
        <begin position="1"/>
        <end position="23"/>
    </location>
</feature>
<feature type="compositionally biased region" description="Basic residues" evidence="3">
    <location>
        <begin position="7"/>
        <end position="19"/>
    </location>
</feature>
<feature type="modified residue" description="N-acetylserine" evidence="7">
    <location>
        <position position="2"/>
    </location>
</feature>
<feature type="modified residue" description="Phosphoserine; by RPS6KA5" evidence="4">
    <location>
        <position position="2"/>
    </location>
</feature>
<feature type="modified residue" description="Citrulline; alternate" evidence="7">
    <location>
        <position position="4"/>
    </location>
</feature>
<feature type="modified residue" description="Symmetric dimethylarginine; by PRMT5; alternate" evidence="2">
    <location>
        <position position="4"/>
    </location>
</feature>
<feature type="modified residue" description="N6-(2-hydroxyisobutyryl)lysine" evidence="20">
    <location>
        <position position="6"/>
    </location>
</feature>
<feature type="modified residue" description="N6-(2-hydroxyisobutyryl)lysine; alternate" evidence="20">
    <location>
        <position position="10"/>
    </location>
</feature>
<feature type="modified residue" description="N6-(beta-hydroxybutyryl)lysine; alternate" evidence="23">
    <location>
        <position position="10"/>
    </location>
</feature>
<feature type="modified residue" description="N6-lactoyllysine; alternate" evidence="1">
    <location>
        <position position="10"/>
    </location>
</feature>
<feature type="modified residue" description="N6-succinyllysine; alternate" evidence="15">
    <location>
        <position position="10"/>
    </location>
</feature>
<feature type="modified residue" description="N6-(beta-hydroxybutyryl)lysine" evidence="23">
    <location>
        <position position="14"/>
    </location>
</feature>
<feature type="modified residue" description="N6-(2-hydroxyisobutyryl)lysine; alternate" evidence="20">
    <location>
        <position position="37"/>
    </location>
</feature>
<feature type="modified residue" description="N6-(beta-hydroxybutyryl)lysine; alternate" evidence="23">
    <location>
        <position position="37"/>
    </location>
</feature>
<feature type="modified residue" description="N6-crotonyllysine; alternate" evidence="14">
    <location>
        <position position="37"/>
    </location>
</feature>
<feature type="modified residue" description="N6-(2-hydroxyisobutyryl)lysine" evidence="20">
    <location>
        <position position="75"/>
    </location>
</feature>
<feature type="modified residue" description="N6-(2-hydroxyisobutyryl)lysine" evidence="20">
    <location>
        <position position="76"/>
    </location>
</feature>
<feature type="modified residue" description="N6-(2-hydroxyisobutyryl)lysine; alternate" evidence="20">
    <location>
        <position position="96"/>
    </location>
</feature>
<feature type="modified residue" description="N6-(beta-hydroxybutyryl)lysine; alternate" evidence="23">
    <location>
        <position position="96"/>
    </location>
</feature>
<feature type="modified residue" description="N6-glutaryllysine; alternate" evidence="24">
    <location>
        <position position="96"/>
    </location>
</feature>
<feature type="modified residue" description="N6-succinyllysine; alternate" evidence="15">
    <location>
        <position position="96"/>
    </location>
</feature>
<feature type="modified residue" description="N5-methylglutamine" evidence="19">
    <location>
        <position position="105"/>
    </location>
</feature>
<feature type="modified residue" description="N6-(2-hydroxyisobutyryl)lysine; alternate" evidence="20">
    <location>
        <position position="119"/>
    </location>
</feature>
<feature type="modified residue" description="N6-(beta-hydroxybutyryl)lysine; alternate" evidence="23">
    <location>
        <position position="119"/>
    </location>
</feature>
<feature type="modified residue" description="N6-crotonyllysine; alternate" evidence="14">
    <location>
        <position position="119"/>
    </location>
</feature>
<feature type="modified residue" description="N6-glutaryllysine; alternate" evidence="24">
    <location>
        <position position="119"/>
    </location>
</feature>
<feature type="modified residue" description="N6-crotonyllysine; alternate" evidence="14">
    <location>
        <position position="120"/>
    </location>
</feature>
<feature type="modified residue" description="N6-glutaryllysine; alternate" evidence="24">
    <location>
        <position position="120"/>
    </location>
</feature>
<feature type="modified residue" description="Phosphothreonine; by DCAF1" evidence="5 18">
    <location>
        <position position="121"/>
    </location>
</feature>
<feature type="modified residue" description="N6-crotonyllysine" evidence="14">
    <location>
        <position position="127"/>
    </location>
</feature>
<feature type="cross-link" description="Glycyl lysine isopeptide (Lys-Gly) (interchain with G-Cter in ubiquitin)" evidence="16 17">
    <location>
        <position position="14"/>
    </location>
</feature>
<feature type="cross-link" description="Glycyl lysine isopeptide (Lys-Gly) (interchain with G-Cter in ubiquitin)" evidence="16 17">
    <location>
        <position position="16"/>
    </location>
</feature>
<feature type="cross-link" description="Glycyl lysine isopeptide (Lys-Gly) (interchain with G-Cter in ubiquitin); alternate" evidence="6 8 9 21">
    <location>
        <position position="120"/>
    </location>
</feature>
<feature type="mutagenesis site" description="Blocks the inhibition of transcription by RPS6KA5/MSK1." evidence="4">
    <original>S</original>
    <variation>A</variation>
    <location>
        <position position="2"/>
    </location>
</feature>
<feature type="helix" evidence="27">
    <location>
        <begin position="20"/>
        <end position="22"/>
    </location>
</feature>
<feature type="helix" evidence="27">
    <location>
        <begin position="28"/>
        <end position="36"/>
    </location>
</feature>
<feature type="turn" evidence="27">
    <location>
        <begin position="37"/>
        <end position="39"/>
    </location>
</feature>
<feature type="strand" evidence="27">
    <location>
        <begin position="42"/>
        <end position="44"/>
    </location>
</feature>
<feature type="helix" evidence="27">
    <location>
        <begin position="47"/>
        <end position="73"/>
    </location>
</feature>
<feature type="strand" evidence="27">
    <location>
        <begin position="77"/>
        <end position="79"/>
    </location>
</feature>
<feature type="helix" evidence="27">
    <location>
        <begin position="81"/>
        <end position="90"/>
    </location>
</feature>
<feature type="helix" evidence="27">
    <location>
        <begin position="92"/>
        <end position="97"/>
    </location>
</feature>
<feature type="turn" evidence="27">
    <location>
        <begin position="98"/>
        <end position="100"/>
    </location>
</feature>
<feature type="strand" evidence="27">
    <location>
        <begin position="101"/>
        <end position="103"/>
    </location>
</feature>
<feature type="helix" evidence="27">
    <location>
        <begin position="114"/>
        <end position="116"/>
    </location>
</feature>
<keyword id="KW-0002">3D-structure</keyword>
<keyword id="KW-0007">Acetylation</keyword>
<keyword id="KW-0158">Chromosome</keyword>
<keyword id="KW-0164">Citrullination</keyword>
<keyword id="KW-0238">DNA-binding</keyword>
<keyword id="KW-0379">Hydroxylation</keyword>
<keyword id="KW-1017">Isopeptide bond</keyword>
<keyword id="KW-0488">Methylation</keyword>
<keyword id="KW-0544">Nucleosome core</keyword>
<keyword id="KW-0539">Nucleus</keyword>
<keyword id="KW-0597">Phosphoprotein</keyword>
<keyword id="KW-1267">Proteomics identification</keyword>
<keyword id="KW-1185">Reference proteome</keyword>
<keyword id="KW-0832">Ubl conjugation</keyword>
<name>H2A1A_HUMAN</name>
<dbReference type="EMBL" id="AY131982">
    <property type="protein sequence ID" value="AAN59963.1"/>
    <property type="molecule type" value="Genomic_DNA"/>
</dbReference>
<dbReference type="EMBL" id="AL512384">
    <property type="status" value="NOT_ANNOTATED_CDS"/>
    <property type="molecule type" value="Genomic_DNA"/>
</dbReference>
<dbReference type="EMBL" id="BC062211">
    <property type="protein sequence ID" value="AAH62211.1"/>
    <property type="molecule type" value="mRNA"/>
</dbReference>
<dbReference type="CCDS" id="CCDS4562.1"/>
<dbReference type="RefSeq" id="NP_734466.1">
    <property type="nucleotide sequence ID" value="NM_170745.3"/>
</dbReference>
<dbReference type="PDB" id="5GSU">
    <property type="method" value="X-ray"/>
    <property type="resolution" value="3.10 A"/>
    <property type="chains" value="C/G=2-131"/>
</dbReference>
<dbReference type="PDB" id="5GT0">
    <property type="method" value="X-ray"/>
    <property type="resolution" value="2.82 A"/>
    <property type="chains" value="C/G=2-131"/>
</dbReference>
<dbReference type="PDBsum" id="5GSU"/>
<dbReference type="PDBsum" id="5GT0"/>
<dbReference type="SMR" id="Q96QV6"/>
<dbReference type="BioGRID" id="128742">
    <property type="interactions" value="77"/>
</dbReference>
<dbReference type="CORUM" id="Q96QV6"/>
<dbReference type="DIP" id="DIP-43896N"/>
<dbReference type="FunCoup" id="Q96QV6">
    <property type="interactions" value="333"/>
</dbReference>
<dbReference type="IntAct" id="Q96QV6">
    <property type="interactions" value="14"/>
</dbReference>
<dbReference type="MINT" id="Q96QV6"/>
<dbReference type="STRING" id="9606.ENSP00000297012"/>
<dbReference type="GlyGen" id="Q96QV6">
    <property type="glycosylation" value="2 sites, 1 N-linked glycan (1 site), 1 O-linked glycan (1 site)"/>
</dbReference>
<dbReference type="iPTMnet" id="Q96QV6"/>
<dbReference type="PhosphoSitePlus" id="Q96QV6"/>
<dbReference type="SwissPalm" id="Q96QV6"/>
<dbReference type="BioMuta" id="HIST1H2AA"/>
<dbReference type="DMDM" id="74752099"/>
<dbReference type="jPOST" id="Q96QV6"/>
<dbReference type="MassIVE" id="Q96QV6"/>
<dbReference type="PaxDb" id="9606-ENSP00000297012"/>
<dbReference type="PeptideAtlas" id="Q96QV6"/>
<dbReference type="ProteomicsDB" id="77911"/>
<dbReference type="Pumba" id="Q96QV6"/>
<dbReference type="TopDownProteomics" id="Q96QV6"/>
<dbReference type="Antibodypedia" id="10724">
    <property type="antibodies" value="82 antibodies from 15 providers"/>
</dbReference>
<dbReference type="DNASU" id="221613"/>
<dbReference type="Ensembl" id="ENST00000297012.5">
    <property type="protein sequence ID" value="ENSP00000297012.4"/>
    <property type="gene ID" value="ENSG00000164508.6"/>
</dbReference>
<dbReference type="Ensembl" id="ENST00000703603.1">
    <property type="protein sequence ID" value="ENSP00000515391.1"/>
    <property type="gene ID" value="ENSG00000164508.6"/>
</dbReference>
<dbReference type="GeneID" id="221613"/>
<dbReference type="KEGG" id="hsa:221613"/>
<dbReference type="MANE-Select" id="ENST00000297012.5">
    <property type="protein sequence ID" value="ENSP00000297012.4"/>
    <property type="RefSeq nucleotide sequence ID" value="NM_170745.3"/>
    <property type="RefSeq protein sequence ID" value="NP_734466.1"/>
</dbReference>
<dbReference type="UCSC" id="uc003nfc.4">
    <property type="organism name" value="human"/>
</dbReference>
<dbReference type="AGR" id="HGNC:18729"/>
<dbReference type="CTD" id="221613"/>
<dbReference type="DisGeNET" id="221613"/>
<dbReference type="GeneCards" id="H2AC1"/>
<dbReference type="HGNC" id="HGNC:18729">
    <property type="gene designation" value="H2AC1"/>
</dbReference>
<dbReference type="HPA" id="ENSG00000164508">
    <property type="expression patterns" value="Tissue enriched (testis)"/>
</dbReference>
<dbReference type="MIM" id="613499">
    <property type="type" value="gene"/>
</dbReference>
<dbReference type="neXtProt" id="NX_Q96QV6"/>
<dbReference type="OpenTargets" id="ENSG00000164508"/>
<dbReference type="VEuPathDB" id="HostDB:ENSG00000164508"/>
<dbReference type="eggNOG" id="KOG1756">
    <property type="taxonomic scope" value="Eukaryota"/>
</dbReference>
<dbReference type="GeneTree" id="ENSGT00940000161385"/>
<dbReference type="HOGENOM" id="CLU_062828_3_1_1"/>
<dbReference type="InParanoid" id="Q96QV6"/>
<dbReference type="OMA" id="RRNICHA"/>
<dbReference type="OrthoDB" id="1104503at2759"/>
<dbReference type="PAN-GO" id="Q96QV6">
    <property type="GO annotations" value="1 GO annotation based on evolutionary models"/>
</dbReference>
<dbReference type="PhylomeDB" id="Q96QV6"/>
<dbReference type="TreeFam" id="TF300137"/>
<dbReference type="PathwayCommons" id="Q96QV6"/>
<dbReference type="Reactome" id="R-HSA-3214815">
    <property type="pathway name" value="HDACs deacetylate histones"/>
</dbReference>
<dbReference type="Reactome" id="R-HSA-3214847">
    <property type="pathway name" value="HATs acetylate histones"/>
</dbReference>
<dbReference type="Reactome" id="R-HSA-3214858">
    <property type="pathway name" value="RMTs methylate histone arginines"/>
</dbReference>
<dbReference type="Reactome" id="R-HSA-5689603">
    <property type="pathway name" value="UCH proteinases"/>
</dbReference>
<dbReference type="Reactome" id="R-HSA-5689880">
    <property type="pathway name" value="Ub-specific processing proteases"/>
</dbReference>
<dbReference type="Reactome" id="R-HSA-5689901">
    <property type="pathway name" value="Metalloprotease DUBs"/>
</dbReference>
<dbReference type="Reactome" id="R-HSA-9609690">
    <property type="pathway name" value="HCMV Early Events"/>
</dbReference>
<dbReference type="Reactome" id="R-HSA-9610379">
    <property type="pathway name" value="HCMV Late Events"/>
</dbReference>
<dbReference type="SignaLink" id="Q96QV6"/>
<dbReference type="SIGNOR" id="Q96QV6"/>
<dbReference type="BioGRID-ORCS" id="221613">
    <property type="hits" value="11 hits in 1135 CRISPR screens"/>
</dbReference>
<dbReference type="CD-CODE" id="91857CE7">
    <property type="entry name" value="Nucleolus"/>
</dbReference>
<dbReference type="GeneWiki" id="HIST1H2AA"/>
<dbReference type="GenomeRNAi" id="221613"/>
<dbReference type="Pharos" id="Q96QV6">
    <property type="development level" value="Tbio"/>
</dbReference>
<dbReference type="PRO" id="PR:Q96QV6"/>
<dbReference type="Proteomes" id="UP000005640">
    <property type="component" value="Chromosome 6"/>
</dbReference>
<dbReference type="RNAct" id="Q96QV6">
    <property type="molecule type" value="protein"/>
</dbReference>
<dbReference type="Bgee" id="ENSG00000164508">
    <property type="expression patterns" value="Expressed in male germ line stem cell (sensu Vertebrata) in testis and 13 other cell types or tissues"/>
</dbReference>
<dbReference type="GO" id="GO:0000781">
    <property type="term" value="C:chromosome, telomeric region"/>
    <property type="evidence" value="ECO:0007005"/>
    <property type="project" value="BHF-UCL"/>
</dbReference>
<dbReference type="GO" id="GO:0070062">
    <property type="term" value="C:extracellular exosome"/>
    <property type="evidence" value="ECO:0007005"/>
    <property type="project" value="UniProtKB"/>
</dbReference>
<dbReference type="GO" id="GO:0001674">
    <property type="term" value="C:female germ cell nucleus"/>
    <property type="evidence" value="ECO:0007669"/>
    <property type="project" value="Ensembl"/>
</dbReference>
<dbReference type="GO" id="GO:0000786">
    <property type="term" value="C:nucleosome"/>
    <property type="evidence" value="ECO:0000318"/>
    <property type="project" value="GO_Central"/>
</dbReference>
<dbReference type="GO" id="GO:0005634">
    <property type="term" value="C:nucleus"/>
    <property type="evidence" value="ECO:0007005"/>
    <property type="project" value="UniProtKB"/>
</dbReference>
<dbReference type="GO" id="GO:0003677">
    <property type="term" value="F:DNA binding"/>
    <property type="evidence" value="ECO:0007669"/>
    <property type="project" value="UniProtKB-KW"/>
</dbReference>
<dbReference type="GO" id="GO:0046982">
    <property type="term" value="F:protein heterodimerization activity"/>
    <property type="evidence" value="ECO:0007669"/>
    <property type="project" value="InterPro"/>
</dbReference>
<dbReference type="GO" id="GO:0030527">
    <property type="term" value="F:structural constituent of chromatin"/>
    <property type="evidence" value="ECO:0000318"/>
    <property type="project" value="GO_Central"/>
</dbReference>
<dbReference type="GO" id="GO:0031507">
    <property type="term" value="P:heterochromatin formation"/>
    <property type="evidence" value="ECO:0000318"/>
    <property type="project" value="GO_Central"/>
</dbReference>
<dbReference type="CDD" id="cd00074">
    <property type="entry name" value="HFD_H2A"/>
    <property type="match status" value="1"/>
</dbReference>
<dbReference type="FunFam" id="1.10.20.10:FF:000103">
    <property type="entry name" value="Histone H2A type 1"/>
    <property type="match status" value="1"/>
</dbReference>
<dbReference type="Gene3D" id="1.10.20.10">
    <property type="entry name" value="Histone, subunit A"/>
    <property type="match status" value="1"/>
</dbReference>
<dbReference type="InterPro" id="IPR009072">
    <property type="entry name" value="Histone-fold"/>
</dbReference>
<dbReference type="InterPro" id="IPR002119">
    <property type="entry name" value="Histone_H2A"/>
</dbReference>
<dbReference type="InterPro" id="IPR007125">
    <property type="entry name" value="Histone_H2A/H2B/H3"/>
</dbReference>
<dbReference type="InterPro" id="IPR032454">
    <property type="entry name" value="Histone_H2A_C"/>
</dbReference>
<dbReference type="InterPro" id="IPR032458">
    <property type="entry name" value="Histone_H2A_CS"/>
</dbReference>
<dbReference type="PANTHER" id="PTHR23430">
    <property type="entry name" value="HISTONE H2A"/>
    <property type="match status" value="1"/>
</dbReference>
<dbReference type="Pfam" id="PF00125">
    <property type="entry name" value="Histone"/>
    <property type="match status" value="1"/>
</dbReference>
<dbReference type="Pfam" id="PF16211">
    <property type="entry name" value="Histone_H2A_C"/>
    <property type="match status" value="1"/>
</dbReference>
<dbReference type="PRINTS" id="PR00620">
    <property type="entry name" value="HISTONEH2A"/>
</dbReference>
<dbReference type="SMART" id="SM00414">
    <property type="entry name" value="H2A"/>
    <property type="match status" value="1"/>
</dbReference>
<dbReference type="SUPFAM" id="SSF47113">
    <property type="entry name" value="Histone-fold"/>
    <property type="match status" value="1"/>
</dbReference>
<dbReference type="PROSITE" id="PS00046">
    <property type="entry name" value="HISTONE_H2A"/>
    <property type="match status" value="1"/>
</dbReference>
<proteinExistence type="evidence at protein level"/>
<comment type="function">
    <text>Core component of nucleosome. Nucleosomes wrap and compact DNA into chromatin, limiting DNA accessibility to the cellular machineries which require DNA as a template. Histones thereby play a central role in transcription regulation, DNA repair, DNA replication and chromosomal stability. DNA accessibility is regulated via a complex set of post-translational modifications of histones, also called histone code, and nucleosome remodeling.</text>
</comment>
<comment type="subunit">
    <text>The nucleosome is a histone octamer containing two molecules each of H2A, H2B, H3 and H4 assembled in one H3-H4 heterotetramer and two H2A-H2B heterodimers. The octamer wraps approximately 147 bp of DNA.</text>
</comment>
<comment type="subcellular location">
    <subcellularLocation>
        <location>Nucleus</location>
    </subcellularLocation>
    <subcellularLocation>
        <location>Chromosome</location>
    </subcellularLocation>
</comment>
<comment type="PTM">
    <text evidence="7">Deiminated on Arg-4 in granulocytes upon calcium entry.</text>
</comment>
<comment type="PTM">
    <text evidence="6 8 9 10 11 12 13 16 17 19 21 22">Monoubiquitination of Lys-120 (H2AK119Ub) by RING1, TRIM37 and RNF2/RING2 complex gives a specific tag for epigenetic transcriptional repression and participates in X chromosome inactivation of female mammals. It is involved in the initiation of both imprinted and random X inactivation. Ubiquitinated H2A is enriched in inactive X chromosome chromatin. Ubiquitination of H2A functions downstream of methylation of 'Lys-27' of histone H3 (H3K27me). H2AK119Ub by RNF2/RING2 can also be induced by ultraviolet and may be involved in DNA repair. Monoubiquitination of Lys-120 (H2AK119Ub) by TRIM37 may promote transformation of cells in a number of breast cancers (PubMed:25470042). Following DNA double-strand breaks (DSBs), it is ubiquitinated through 'Lys-63' linkage of ubiquitin moieties by the E2 ligase UBE2N and the E3 ligases RNF8 and RNF168, leading to the recruitment of repair proteins to sites of DNA damage. Ubiquitination at Lys-14 and Lys-16 (H2AK13Ub and H2AK15Ub, respectively) in response to DNA damage is initiated by RNF168 that mediates monoubiquitination at these 2 sites, and 'Lys-63'-linked ubiquitin are then conjugated to monoubiquitin; RNF8 is able to extend 'Lys-63'-linked ubiquitin chains in vitro. Deubiquitinated by USP51 at Lys-14 and Lys-16 (H2AK13Ub and H2AK15Ub, respectively) after damaged DNA is repaired (PubMed:27083998). H2AK119Ub and ionizing radiation-induced 'Lys-63'-linked ubiquitination (H2AK13Ub and H2AK15Ub) are distinct events.</text>
</comment>
<comment type="PTM">
    <text evidence="4 5 7 18">Phosphorylation on Ser-2 (H2AS1ph) is enhanced during mitosis. Phosphorylation on Ser-2 by RPS6KA5/MSK1 directly represses transcription. Acetylation of H3 inhibits Ser-2 phosphorylation by RPS6KA5/MSK1. Phosphorylation at Thr-121 (H2AT120ph) by DCAF1 is present in the regulatory region of many tumor suppresor genes and down-regulates their transcription.</text>
</comment>
<comment type="PTM">
    <text evidence="19">Glutamine methylation at Gln-105 (H2AQ104me) by FBL is specifically dedicated to polymerase I. It is present at 35S ribosomal DNA locus and impairs binding of the FACT complex (PubMed:24352239).</text>
</comment>
<comment type="PTM">
    <text evidence="2">Symmetric dimethylation on Arg-4 by the PRDM1/PRMT5 complex may play a crucial role in the germ-cell lineage.</text>
</comment>
<comment type="PTM">
    <text evidence="14">Crotonylation (Kcr) is specifically present in male germ cells and marks testis-specific genes in post-meiotic cells, including X-linked genes that escape sex chromosome inactivation in haploid cells. Crotonylation marks active promoters and enhancers and confers resistance to transcriptional repressors. It is also associated with post-meiotically activated genes on autosomes.</text>
</comment>
<comment type="PTM">
    <text evidence="1">Lactylated in macrophages by EP300/P300 by using lactoyl-CoA directly derived from endogenous or exogenous lactate, leading to stimulates gene transcription.</text>
</comment>
<comment type="similarity">
    <text evidence="25">Belongs to the histone H2A family.</text>
</comment>
<reference key="1">
    <citation type="journal article" date="2002" name="Genomics">
        <title>The human and mouse replication-dependent histone genes.</title>
        <authorList>
            <person name="Marzluff W.F."/>
            <person name="Gongidi P."/>
            <person name="Woods K.R."/>
            <person name="Jin J."/>
            <person name="Maltais L.J."/>
        </authorList>
    </citation>
    <scope>NUCLEOTIDE SEQUENCE [GENOMIC DNA]</scope>
</reference>
<reference key="2">
    <citation type="journal article" date="2003" name="Nature">
        <title>The DNA sequence and analysis of human chromosome 6.</title>
        <authorList>
            <person name="Mungall A.J."/>
            <person name="Palmer S.A."/>
            <person name="Sims S.K."/>
            <person name="Edwards C.A."/>
            <person name="Ashurst J.L."/>
            <person name="Wilming L."/>
            <person name="Jones M.C."/>
            <person name="Horton R."/>
            <person name="Hunt S.E."/>
            <person name="Scott C.E."/>
            <person name="Gilbert J.G.R."/>
            <person name="Clamp M.E."/>
            <person name="Bethel G."/>
            <person name="Milne S."/>
            <person name="Ainscough R."/>
            <person name="Almeida J.P."/>
            <person name="Ambrose K.D."/>
            <person name="Andrews T.D."/>
            <person name="Ashwell R.I.S."/>
            <person name="Babbage A.K."/>
            <person name="Bagguley C.L."/>
            <person name="Bailey J."/>
            <person name="Banerjee R."/>
            <person name="Barker D.J."/>
            <person name="Barlow K.F."/>
            <person name="Bates K."/>
            <person name="Beare D.M."/>
            <person name="Beasley H."/>
            <person name="Beasley O."/>
            <person name="Bird C.P."/>
            <person name="Blakey S.E."/>
            <person name="Bray-Allen S."/>
            <person name="Brook J."/>
            <person name="Brown A.J."/>
            <person name="Brown J.Y."/>
            <person name="Burford D.C."/>
            <person name="Burrill W."/>
            <person name="Burton J."/>
            <person name="Carder C."/>
            <person name="Carter N.P."/>
            <person name="Chapman J.C."/>
            <person name="Clark S.Y."/>
            <person name="Clark G."/>
            <person name="Clee C.M."/>
            <person name="Clegg S."/>
            <person name="Cobley V."/>
            <person name="Collier R.E."/>
            <person name="Collins J.E."/>
            <person name="Colman L.K."/>
            <person name="Corby N.R."/>
            <person name="Coville G.J."/>
            <person name="Culley K.M."/>
            <person name="Dhami P."/>
            <person name="Davies J."/>
            <person name="Dunn M."/>
            <person name="Earthrowl M.E."/>
            <person name="Ellington A.E."/>
            <person name="Evans K.A."/>
            <person name="Faulkner L."/>
            <person name="Francis M.D."/>
            <person name="Frankish A."/>
            <person name="Frankland J."/>
            <person name="French L."/>
            <person name="Garner P."/>
            <person name="Garnett J."/>
            <person name="Ghori M.J."/>
            <person name="Gilby L.M."/>
            <person name="Gillson C.J."/>
            <person name="Glithero R.J."/>
            <person name="Grafham D.V."/>
            <person name="Grant M."/>
            <person name="Gribble S."/>
            <person name="Griffiths C."/>
            <person name="Griffiths M.N.D."/>
            <person name="Hall R."/>
            <person name="Halls K.S."/>
            <person name="Hammond S."/>
            <person name="Harley J.L."/>
            <person name="Hart E.A."/>
            <person name="Heath P.D."/>
            <person name="Heathcott R."/>
            <person name="Holmes S.J."/>
            <person name="Howden P.J."/>
            <person name="Howe K.L."/>
            <person name="Howell G.R."/>
            <person name="Huckle E."/>
            <person name="Humphray S.J."/>
            <person name="Humphries M.D."/>
            <person name="Hunt A.R."/>
            <person name="Johnson C.M."/>
            <person name="Joy A.A."/>
            <person name="Kay M."/>
            <person name="Keenan S.J."/>
            <person name="Kimberley A.M."/>
            <person name="King A."/>
            <person name="Laird G.K."/>
            <person name="Langford C."/>
            <person name="Lawlor S."/>
            <person name="Leongamornlert D.A."/>
            <person name="Leversha M."/>
            <person name="Lloyd C.R."/>
            <person name="Lloyd D.M."/>
            <person name="Loveland J.E."/>
            <person name="Lovell J."/>
            <person name="Martin S."/>
            <person name="Mashreghi-Mohammadi M."/>
            <person name="Maslen G.L."/>
            <person name="Matthews L."/>
            <person name="McCann O.T."/>
            <person name="McLaren S.J."/>
            <person name="McLay K."/>
            <person name="McMurray A."/>
            <person name="Moore M.J.F."/>
            <person name="Mullikin J.C."/>
            <person name="Niblett D."/>
            <person name="Nickerson T."/>
            <person name="Novik K.L."/>
            <person name="Oliver K."/>
            <person name="Overton-Larty E.K."/>
            <person name="Parker A."/>
            <person name="Patel R."/>
            <person name="Pearce A.V."/>
            <person name="Peck A.I."/>
            <person name="Phillimore B.J.C.T."/>
            <person name="Phillips S."/>
            <person name="Plumb R.W."/>
            <person name="Porter K.M."/>
            <person name="Ramsey Y."/>
            <person name="Ranby S.A."/>
            <person name="Rice C.M."/>
            <person name="Ross M.T."/>
            <person name="Searle S.M."/>
            <person name="Sehra H.K."/>
            <person name="Sheridan E."/>
            <person name="Skuce C.D."/>
            <person name="Smith S."/>
            <person name="Smith M."/>
            <person name="Spraggon L."/>
            <person name="Squares S.L."/>
            <person name="Steward C.A."/>
            <person name="Sycamore N."/>
            <person name="Tamlyn-Hall G."/>
            <person name="Tester J."/>
            <person name="Theaker A.J."/>
            <person name="Thomas D.W."/>
            <person name="Thorpe A."/>
            <person name="Tracey A."/>
            <person name="Tromans A."/>
            <person name="Tubby B."/>
            <person name="Wall M."/>
            <person name="Wallis J.M."/>
            <person name="West A.P."/>
            <person name="White S.S."/>
            <person name="Whitehead S.L."/>
            <person name="Whittaker H."/>
            <person name="Wild A."/>
            <person name="Willey D.J."/>
            <person name="Wilmer T.E."/>
            <person name="Wood J.M."/>
            <person name="Wray P.W."/>
            <person name="Wyatt J.C."/>
            <person name="Young L."/>
            <person name="Younger R.M."/>
            <person name="Bentley D.R."/>
            <person name="Coulson A."/>
            <person name="Durbin R.M."/>
            <person name="Hubbard T."/>
            <person name="Sulston J.E."/>
            <person name="Dunham I."/>
            <person name="Rogers J."/>
            <person name="Beck S."/>
        </authorList>
    </citation>
    <scope>NUCLEOTIDE SEQUENCE [LARGE SCALE GENOMIC DNA]</scope>
</reference>
<reference key="3">
    <citation type="journal article" date="2004" name="Genome Res.">
        <title>The status, quality, and expansion of the NIH full-length cDNA project: the Mammalian Gene Collection (MGC).</title>
        <authorList>
            <consortium name="The MGC Project Team"/>
        </authorList>
    </citation>
    <scope>NUCLEOTIDE SEQUENCE [LARGE SCALE MRNA]</scope>
    <source>
        <tissue>Testis</tissue>
    </source>
</reference>
<reference key="4">
    <citation type="journal article" date="2004" name="Genes Dev.">
        <title>Nucleosomal histone kinase-1 phosphorylates H2A Thr 119 during mitosis in the early Drosophila embryo.</title>
        <authorList>
            <person name="Aihara H."/>
            <person name="Nakagawa T."/>
            <person name="Yasui K."/>
            <person name="Ohta T."/>
            <person name="Hirose S."/>
            <person name="Dhomae N."/>
            <person name="Takio K."/>
            <person name="Kaneko M."/>
            <person name="Takeshima Y."/>
            <person name="Muramatsu M."/>
            <person name="Ito T."/>
        </authorList>
    </citation>
    <scope>PHOSPHORYLATION AT THR-121</scope>
</reference>
<reference key="5">
    <citation type="journal article" date="2004" name="J. Biol. Chem.">
        <title>Phosphorylation of histone H2A inhibits transcription on chromatin templates.</title>
        <authorList>
            <person name="Zhang Y."/>
            <person name="Griffin K."/>
            <person name="Mondal N."/>
            <person name="Parvin J.D."/>
        </authorList>
    </citation>
    <scope>PHOSPHORYLATION AT SER-2</scope>
    <scope>MUTAGENESIS OF SER-2</scope>
</reference>
<reference key="6">
    <citation type="journal article" date="2004" name="Nature">
        <title>Role of histone H2A ubiquitination in Polycomb silencing.</title>
        <authorList>
            <person name="Wang H."/>
            <person name="Wang L."/>
            <person name="Erdjument-Bromage H."/>
            <person name="Vidal M."/>
            <person name="Tempst P."/>
            <person name="Jones R.S."/>
            <person name="Zhang Y."/>
        </authorList>
    </citation>
    <scope>UBIQUITINATION AT LYS-120</scope>
</reference>
<reference key="7">
    <citation type="journal article" date="2005" name="Biochemistry">
        <title>Deimination of histone H2A and H4 at arginine 3 in HL-60 granulocytes.</title>
        <authorList>
            <person name="Hagiwara T."/>
            <person name="Hidaka Y."/>
            <person name="Yamada M."/>
        </authorList>
    </citation>
    <scope>ACETYLATION AT SER-2</scope>
    <scope>CITRULLINATION AT ARG-4</scope>
    <scope>IDENTIFICATION BY MASS SPECTROMETRY</scope>
</reference>
<reference key="8">
    <citation type="journal article" date="2005" name="Mol. Cell">
        <title>Role of Bmi-1 and Ring1A in H2A ubiquitylation and Hox gene silencing.</title>
        <authorList>
            <person name="Cao R."/>
            <person name="Tsukada Y."/>
            <person name="Zhang Y."/>
        </authorList>
    </citation>
    <scope>UBIQUITINATION AT LYS-120</scope>
</reference>
<reference key="9">
    <citation type="journal article" date="2006" name="Genes Dev.">
        <title>DNA damage triggers nucleotide excision repair-dependent monoubiquitylation of histone H2A.</title>
        <authorList>
            <person name="Bergink S."/>
            <person name="Salomons F.A."/>
            <person name="Hoogstraten D."/>
            <person name="Groothuis T.A.M."/>
            <person name="de Waard H."/>
            <person name="Wu J."/>
            <person name="Yuan L."/>
            <person name="Citterio E."/>
            <person name="Houtsmuller A.B."/>
            <person name="Neefjes J."/>
            <person name="Hoeijmakers J.H.J."/>
            <person name="Vermeulen W."/>
            <person name="Dantuma N.P."/>
        </authorList>
    </citation>
    <scope>UBIQUITINATION AT LYS-120</scope>
</reference>
<reference key="10">
    <citation type="journal article" date="2007" name="Cell">
        <title>RNF8 ubiquitylates histones at DNA double-strand breaks and promotes assembly of repair proteins.</title>
        <authorList>
            <person name="Mailand N."/>
            <person name="Bekker-Jensen S."/>
            <person name="Faustrup H."/>
            <person name="Melander F."/>
            <person name="Bartek J."/>
            <person name="Lukas C."/>
            <person name="Lukas J."/>
        </authorList>
    </citation>
    <scope>UBIQUITINATION</scope>
</reference>
<reference key="11">
    <citation type="journal article" date="2007" name="Cell">
        <title>RNF8 transduces the DNA-damage signal via histone ubiquitylation and checkpoint protein assembly.</title>
        <authorList>
            <person name="Huen M.S.Y."/>
            <person name="Grant R."/>
            <person name="Manke I."/>
            <person name="Minn K."/>
            <person name="Yu X."/>
            <person name="Yaffe M.B."/>
            <person name="Chen J."/>
        </authorList>
    </citation>
    <scope>UBIQUITINATION</scope>
</reference>
<reference key="12">
    <citation type="journal article" date="2009" name="Cell">
        <title>The RIDDLE syndrome protein mediates a ubiquitin-dependent signaling cascade at sites of DNA damage.</title>
        <authorList>
            <person name="Stewart G.S."/>
            <person name="Panier S."/>
            <person name="Townsend K."/>
            <person name="Al-Hakim A.K."/>
            <person name="Kolas N.K."/>
            <person name="Miller E.S."/>
            <person name="Nakada S."/>
            <person name="Ylanko J."/>
            <person name="Olivarius S."/>
            <person name="Mendez M."/>
            <person name="Oldreive C."/>
            <person name="Wildenhain J."/>
            <person name="Tagliaferro A."/>
            <person name="Pelletier L."/>
            <person name="Taubenheim N."/>
            <person name="Durandy A."/>
            <person name="Byrd P.J."/>
            <person name="Stankovic T."/>
            <person name="Taylor A.M.R."/>
            <person name="Durocher D."/>
        </authorList>
    </citation>
    <scope>UBIQUITINATION</scope>
</reference>
<reference key="13">
    <citation type="journal article" date="2009" name="Cell">
        <title>RNF168 binds and amplifies ubiquitin conjugates on damaged chromosomes to allow accumulation of repair proteins.</title>
        <authorList>
            <person name="Doil C."/>
            <person name="Mailand N."/>
            <person name="Bekker-Jensen S."/>
            <person name="Menard P."/>
            <person name="Larsen D.H."/>
            <person name="Pepperkok R."/>
            <person name="Ellenberg J."/>
            <person name="Panier S."/>
            <person name="Durocher D."/>
            <person name="Bartek J."/>
            <person name="Lukas J."/>
            <person name="Lukas C."/>
        </authorList>
    </citation>
    <scope>UBIQUITINATION</scope>
</reference>
<reference key="14">
    <citation type="journal article" date="2011" name="Cell">
        <title>Identification of 67 histone marks and histone lysine crotonylation as a new type of histone modification.</title>
        <authorList>
            <person name="Tan M."/>
            <person name="Luo H."/>
            <person name="Lee S."/>
            <person name="Jin F."/>
            <person name="Yang J.S."/>
            <person name="Montellier E."/>
            <person name="Buchou T."/>
            <person name="Cheng Z."/>
            <person name="Rousseaux S."/>
            <person name="Rajagopal N."/>
            <person name="Lu Z."/>
            <person name="Ye Z."/>
            <person name="Zhu Q."/>
            <person name="Wysocka J."/>
            <person name="Ye Y."/>
            <person name="Khochbin S."/>
            <person name="Ren B."/>
            <person name="Zhao Y."/>
        </authorList>
    </citation>
    <scope>CROTONYLATION AT LYS-37; LYS-119; LYS-120 AND LYS-127</scope>
</reference>
<reference key="15">
    <citation type="journal article" date="2012" name="Cell">
        <title>RNF168 ubiquitinates K13-15 on H2A/H2AX to drive DNA Damage signaling.</title>
        <authorList>
            <person name="Mattiroli F."/>
            <person name="Vissers J.H."/>
            <person name="van Dijk W.J."/>
            <person name="Ikpa P."/>
            <person name="Citterio E."/>
            <person name="Vermeulen W."/>
            <person name="Marteijn J.A."/>
            <person name="Sixma T.K."/>
        </authorList>
    </citation>
    <scope>UBIQUITINATION AT LYS-14 AND LYS-16 BY RNF168</scope>
</reference>
<reference key="16">
    <citation type="journal article" date="2012" name="Cell Cycle">
        <title>A novel ubiquitin mark at the N-terminal tail of histone H2As targeted by RNF168 ubiquitin ligase.</title>
        <authorList>
            <person name="Gatti M."/>
            <person name="Pinato S."/>
            <person name="Maspero E."/>
            <person name="Soffientini P."/>
            <person name="Polo S."/>
            <person name="Penengo L."/>
        </authorList>
    </citation>
    <scope>UBIQUITINATION AT LYS-14 AND LYS-16 BY RNF168</scope>
</reference>
<reference key="17">
    <citation type="journal article" date="2012" name="Mol. Cell. Proteomics">
        <title>Lysine succinylation and lysine malonylation in histones.</title>
        <authorList>
            <person name="Xie Z."/>
            <person name="Dai J."/>
            <person name="Dai L."/>
            <person name="Tan M."/>
            <person name="Cheng Z."/>
            <person name="Wu Y."/>
            <person name="Boeke J.D."/>
            <person name="Zhao Y."/>
        </authorList>
    </citation>
    <scope>SUCCINYLATION AT LYS-10 AND LYS-96</scope>
</reference>
<reference key="18">
    <citation type="journal article" date="2013" name="Mol. Cell">
        <title>VprBP has intrinsic kinase activity targeting histone H2A and represses gene transcription.</title>
        <authorList>
            <person name="Kim K."/>
            <person name="Kim J.M."/>
            <person name="Kim J.S."/>
            <person name="Choi J."/>
            <person name="Lee Y.S."/>
            <person name="Neamati N."/>
            <person name="Song J.S."/>
            <person name="Heo K."/>
            <person name="An W."/>
        </authorList>
    </citation>
    <scope>PHOSPHORYLATION AT THR-121</scope>
</reference>
<reference key="19">
    <citation type="journal article" date="2014" name="Nat. Chem. Biol.">
        <title>Lysine 2-hydroxyisobutyrylation is a widely distributed active histone mark.</title>
        <authorList>
            <person name="Dai L."/>
            <person name="Peng C."/>
            <person name="Montellier E."/>
            <person name="Lu Z."/>
            <person name="Chen Y."/>
            <person name="Ishii H."/>
            <person name="Debernardi A."/>
            <person name="Buchou T."/>
            <person name="Rousseaux S."/>
            <person name="Jin F."/>
            <person name="Sabari B.R."/>
            <person name="Deng Z."/>
            <person name="Allis C.D."/>
            <person name="Ren B."/>
            <person name="Khochbin S."/>
            <person name="Zhao Y."/>
        </authorList>
    </citation>
    <scope>HYDROXYBUTYRYLATION AT LYS-6; LYS-10; LYS-37; LYS-75; LYS-76; LYS-96 AND LYS-119</scope>
</reference>
<reference key="20">
    <citation type="journal article" date="2014" name="Nature">
        <title>Glutamine methylation in histone H2A is an RNA-polymerase-I-dedicated modification.</title>
        <authorList>
            <person name="Tessarz P."/>
            <person name="Santos-Rosa H."/>
            <person name="Robson S.C."/>
            <person name="Sylvestersen K.B."/>
            <person name="Nelson C.J."/>
            <person name="Nielsen M.L."/>
            <person name="Kouzarides T."/>
        </authorList>
    </citation>
    <scope>METHYLATION AT GLN-105</scope>
</reference>
<reference key="21">
    <citation type="journal article" date="2014" name="Nature">
        <title>TRIM37 is a new histone H2A ubiquitin ligase and breast cancer oncoprotein.</title>
        <authorList>
            <person name="Bhatnagar S."/>
            <person name="Gazin C."/>
            <person name="Chamberlain L."/>
            <person name="Ou J."/>
            <person name="Zhu X."/>
            <person name="Tushir J.S."/>
            <person name="Virbasius C.M."/>
            <person name="Lin L."/>
            <person name="Zhu L.J."/>
            <person name="Wajapeyee N."/>
            <person name="Green M.R."/>
        </authorList>
    </citation>
    <scope>UBIQUITINATION AT LYS-120</scope>
</reference>
<reference key="22">
    <citation type="journal article" date="2016" name="Genes Dev.">
        <title>USP51 deubiquitylates H2AK13,15ub and regulates DNA damage response.</title>
        <authorList>
            <person name="Wang Z."/>
            <person name="Zhang H."/>
            <person name="Liu J."/>
            <person name="Cheruiyot A."/>
            <person name="Lee J.H."/>
            <person name="Ordog T."/>
            <person name="Lou Z."/>
            <person name="You Z."/>
            <person name="Zhang Z."/>
        </authorList>
    </citation>
    <scope>DEUBIQUITINATION AT LYS-14 AND LYS-16 BY USP51</scope>
</reference>
<reference key="23">
    <citation type="journal article" date="2016" name="Mol. Cell">
        <title>Metabolic regulation of gene expression by histone lysine beta-hydroxybutyrylation.</title>
        <authorList>
            <person name="Xie Z."/>
            <person name="Zhang D."/>
            <person name="Chung D."/>
            <person name="Tang Z."/>
            <person name="Huang H."/>
            <person name="Dai L."/>
            <person name="Qi S."/>
            <person name="Li J."/>
            <person name="Colak G."/>
            <person name="Chen Y."/>
            <person name="Xia C."/>
            <person name="Peng C."/>
            <person name="Ruan H."/>
            <person name="Kirkey M."/>
            <person name="Wang D."/>
            <person name="Jensen L.M."/>
            <person name="Kwon O.K."/>
            <person name="Lee S."/>
            <person name="Pletcher S.D."/>
            <person name="Tan M."/>
            <person name="Lombard D.B."/>
            <person name="White K.P."/>
            <person name="Zhao H."/>
            <person name="Li J."/>
            <person name="Roeder R.G."/>
            <person name="Yang X."/>
            <person name="Zhao Y."/>
        </authorList>
    </citation>
    <scope>HYDROXYBUTYRYLATION AT LYS-10; LYS-14; LYS-37; LYS-96 AND LYS-119</scope>
</reference>
<reference key="24">
    <citation type="journal article" date="2019" name="Mol. Cell">
        <title>Glutarylation of histone H4 lysine 91 regulates chromatin dynamics.</title>
        <authorList>
            <person name="Bao X."/>
            <person name="Liu Z."/>
            <person name="Zhang W."/>
            <person name="Gladysz K."/>
            <person name="Fung Y.M.E."/>
            <person name="Tian G."/>
            <person name="Xiong Y."/>
            <person name="Wong J.W.H."/>
            <person name="Yuen K.W.Y."/>
            <person name="Li X.D."/>
        </authorList>
    </citation>
    <scope>GLUTARYLATION AT LYS-96; LYS-119 AND LYS-120</scope>
</reference>
<evidence type="ECO:0000250" key="1">
    <source>
        <dbReference type="UniProtKB" id="P0C0S5"/>
    </source>
</evidence>
<evidence type="ECO:0000250" key="2">
    <source>
        <dbReference type="UniProtKB" id="P22752"/>
    </source>
</evidence>
<evidence type="ECO:0000256" key="3">
    <source>
        <dbReference type="SAM" id="MobiDB-lite"/>
    </source>
</evidence>
<evidence type="ECO:0000269" key="4">
    <source>
    </source>
</evidence>
<evidence type="ECO:0000269" key="5">
    <source>
    </source>
</evidence>
<evidence type="ECO:0000269" key="6">
    <source>
    </source>
</evidence>
<evidence type="ECO:0000269" key="7">
    <source>
    </source>
</evidence>
<evidence type="ECO:0000269" key="8">
    <source>
    </source>
</evidence>
<evidence type="ECO:0000269" key="9">
    <source>
    </source>
</evidence>
<evidence type="ECO:0000269" key="10">
    <source>
    </source>
</evidence>
<evidence type="ECO:0000269" key="11">
    <source>
    </source>
</evidence>
<evidence type="ECO:0000269" key="12">
    <source>
    </source>
</evidence>
<evidence type="ECO:0000269" key="13">
    <source>
    </source>
</evidence>
<evidence type="ECO:0000269" key="14">
    <source>
    </source>
</evidence>
<evidence type="ECO:0000269" key="15">
    <source>
    </source>
</evidence>
<evidence type="ECO:0000269" key="16">
    <source>
    </source>
</evidence>
<evidence type="ECO:0000269" key="17">
    <source>
    </source>
</evidence>
<evidence type="ECO:0000269" key="18">
    <source>
    </source>
</evidence>
<evidence type="ECO:0000269" key="19">
    <source>
    </source>
</evidence>
<evidence type="ECO:0000269" key="20">
    <source>
    </source>
</evidence>
<evidence type="ECO:0000269" key="21">
    <source>
    </source>
</evidence>
<evidence type="ECO:0000269" key="22">
    <source>
    </source>
</evidence>
<evidence type="ECO:0000269" key="23">
    <source>
    </source>
</evidence>
<evidence type="ECO:0000269" key="24">
    <source>
    </source>
</evidence>
<evidence type="ECO:0000305" key="25"/>
<evidence type="ECO:0000312" key="26">
    <source>
        <dbReference type="HGNC" id="HGNC:18729"/>
    </source>
</evidence>
<evidence type="ECO:0007829" key="27">
    <source>
        <dbReference type="PDB" id="5GT0"/>
    </source>
</evidence>
<accession>Q96QV6</accession>